<sequence length="1088" mass="123447">MNTGGRLIAGSHNRNEFVLINADDTARIRSAEELSGQTCKICRDEIELTDNGEPFIACNECAFPTCRPCYEYERREGNQACPQCGTRYKRIKGSPRVEGDEEDDDIDDLEHEFYGMDPEHVTEAALYYMRLNTGRGTDEVSHLYSASPGSEVPLLTYCDEDSDMYSDRHALIVPPSTGLGNRVHHVPFTDSFASIHTRPMVPQKDLTVYGYGSVAWKDRMEVWKKQQIEKLQVVKNERVNDGDGDGFIVDELDDPGLPMMDEGRQPLSRKLPIRSSRINPYRMLIFCRLAILGLFFHYRILHPVNDAFGLWLTSVICEIWFAVSWILDQFPKWYPIERETYLDRLSLRYEKEGKPSELAPVDVFVSTVDPLKEPPLITANTVLSILAVDYPVEKVACYVSDDGAAMLTFEALSYTAEFARKWVPFCKKFSIEPRAPEWYFSQKMDYLKHKVDPAFVMERRAMKRDYEEFKVKINALVSVSQKVPEDGWTMQDGTPWPGNNVRDHPGMIQVFLGHSGVCDMDGNELPRLVYVSREKRPGFDHHKKAGAMNSLIRVSAVLSNAPYLLNVDCDHYINNSKAIREAMCFMMDPQSGKKICYVQFPQRFDGIDRHDRYSNRNVVFFDINMKGLDGIQGPIYVGTGCVFRRQALYGFDAPKKKQPPGRTCNCWPKWCCLCCGMRKKKTGKVKDNQRKKPKETSKQIHALEHIEEGLQVTNAENNSETAQLKLEKKFGQSPVLVASTLLLNGGVPSNVNPASLLRESIQVISCGYEEKTEWGKEIGWIYGSVTEDILTGFKMHCHGWRSVYCMPKRAAFKGSAPINLSDRLHQVLRWALGSVEIFLSRHCPIWYGYGGGLKWLERFSYINSVVYPWTSLPLLVYCSLPAICLLTGKFIVPEISNYAGILFLLMFMSIAVTGILEMQWGKIGIDDWWRNEQFWVIGGVSSHLFALFQGLLKVLAGVSTNFTVTSKAADDGEFSELYIFKWTSLLIPPTTLLIINIVGVIVGVSDAINNGYDSWGPLFGRLFFALWVIVHLYPFLKGLLGKQDRVPTIILVWSILLASILTLLWVRVNPFVSKDGPVLEICGLDCLK</sequence>
<evidence type="ECO:0000250" key="1">
    <source>
        <dbReference type="UniProtKB" id="O48946"/>
    </source>
</evidence>
<evidence type="ECO:0000250" key="2">
    <source>
        <dbReference type="UniProtKB" id="Q941L0"/>
    </source>
</evidence>
<evidence type="ECO:0000250" key="3">
    <source>
        <dbReference type="UniProtKB" id="Q9SWW6"/>
    </source>
</evidence>
<evidence type="ECO:0000255" key="4"/>
<evidence type="ECO:0000255" key="5">
    <source>
        <dbReference type="PROSITE-ProRule" id="PRU00498"/>
    </source>
</evidence>
<evidence type="ECO:0000269" key="6">
    <source>
    </source>
</evidence>
<evidence type="ECO:0000303" key="7">
    <source>
    </source>
</evidence>
<evidence type="ECO:0000305" key="8"/>
<evidence type="ECO:0000312" key="9">
    <source>
        <dbReference type="Araport" id="AT2G21770"/>
    </source>
</evidence>
<evidence type="ECO:0000312" key="10">
    <source>
        <dbReference type="EMBL" id="AAD20396.1"/>
    </source>
</evidence>
<reference key="1">
    <citation type="journal article" date="1999" name="Nature">
        <title>Sequence and analysis of chromosome 2 of the plant Arabidopsis thaliana.</title>
        <authorList>
            <person name="Lin X."/>
            <person name="Kaul S."/>
            <person name="Rounsley S.D."/>
            <person name="Shea T.P."/>
            <person name="Benito M.-I."/>
            <person name="Town C.D."/>
            <person name="Fujii C.Y."/>
            <person name="Mason T.M."/>
            <person name="Bowman C.L."/>
            <person name="Barnstead M.E."/>
            <person name="Feldblyum T.V."/>
            <person name="Buell C.R."/>
            <person name="Ketchum K.A."/>
            <person name="Lee J.J."/>
            <person name="Ronning C.M."/>
            <person name="Koo H.L."/>
            <person name="Moffat K.S."/>
            <person name="Cronin L.A."/>
            <person name="Shen M."/>
            <person name="Pai G."/>
            <person name="Van Aken S."/>
            <person name="Umayam L."/>
            <person name="Tallon L.J."/>
            <person name="Gill J.E."/>
            <person name="Adams M.D."/>
            <person name="Carrera A.J."/>
            <person name="Creasy T.H."/>
            <person name="Goodman H.M."/>
            <person name="Somerville C.R."/>
            <person name="Copenhaver G.P."/>
            <person name="Preuss D."/>
            <person name="Nierman W.C."/>
            <person name="White O."/>
            <person name="Eisen J.A."/>
            <person name="Salzberg S.L."/>
            <person name="Fraser C.M."/>
            <person name="Venter J.C."/>
        </authorList>
    </citation>
    <scope>NUCLEOTIDE SEQUENCE [LARGE SCALE GENOMIC DNA]</scope>
    <source>
        <strain>cv. Columbia</strain>
    </source>
</reference>
<reference key="2">
    <citation type="journal article" date="2017" name="Plant J.">
        <title>Araport11: a complete reannotation of the Arabidopsis thaliana reference genome.</title>
        <authorList>
            <person name="Cheng C.Y."/>
            <person name="Krishnakumar V."/>
            <person name="Chan A.P."/>
            <person name="Thibaud-Nissen F."/>
            <person name="Schobel S."/>
            <person name="Town C.D."/>
        </authorList>
    </citation>
    <scope>GENOME REANNOTATION</scope>
    <source>
        <strain>cv. Columbia</strain>
    </source>
</reference>
<reference key="3">
    <citation type="journal article" date="2000" name="Genome Biol.">
        <title>Higher plant cellulose synthases.</title>
        <authorList>
            <person name="Richmond T."/>
        </authorList>
    </citation>
    <scope>GENE FAMILY</scope>
    <scope>NOMENCLATURE</scope>
</reference>
<reference key="4">
    <citation type="journal article" date="2002" name="Plant Physiol.">
        <title>Genetic complexity of cellulose synthase A gene function in Arabidopsis embryogenesis.</title>
        <authorList>
            <person name="Beeckman T."/>
            <person name="Przemeck G.K.H."/>
            <person name="Stamatiou G."/>
            <person name="Lau R."/>
            <person name="Terryn N."/>
            <person name="De Rycke R."/>
            <person name="Inze D."/>
            <person name="Berleth T."/>
        </authorList>
    </citation>
    <scope>TISSUE SPECIFICITY</scope>
    <scope>DEVELOPMENTAL STAGE</scope>
</reference>
<comment type="function">
    <text evidence="3">Probable catalytic subunit of cellulose synthase terminal complexes ('rosettes'), required for beta-1,4-glucan microfibril crystallization, a major mechanism of the cell wall formation.</text>
</comment>
<comment type="catalytic activity">
    <reaction evidence="8">
        <text>[(1-&gt;4)-beta-D-glucosyl](n) + UDP-alpha-D-glucose = [(1-&gt;4)-beta-D-glucosyl](n+1) + UDP + H(+)</text>
        <dbReference type="Rhea" id="RHEA:19929"/>
        <dbReference type="Rhea" id="RHEA-COMP:10033"/>
        <dbReference type="Rhea" id="RHEA-COMP:10034"/>
        <dbReference type="ChEBI" id="CHEBI:15378"/>
        <dbReference type="ChEBI" id="CHEBI:18246"/>
        <dbReference type="ChEBI" id="CHEBI:58223"/>
        <dbReference type="ChEBI" id="CHEBI:58885"/>
        <dbReference type="EC" id="2.4.1.12"/>
    </reaction>
</comment>
<comment type="cofactor">
    <cofactor evidence="2">
        <name>Mn(2+)</name>
        <dbReference type="ChEBI" id="CHEBI:29035"/>
    </cofactor>
</comment>
<comment type="cofactor">
    <cofactor evidence="3">
        <name>Zn(2+)</name>
        <dbReference type="ChEBI" id="CHEBI:29105"/>
    </cofactor>
    <text evidence="3">Binds 2 Zn(2+) ions per subunit.</text>
</comment>
<comment type="pathway">
    <text>Glycan metabolism; plant cellulose biosynthesis.</text>
</comment>
<comment type="subcellular location">
    <subcellularLocation>
        <location evidence="8">Cell membrane</location>
        <topology evidence="8">Multi-pass membrane protein</topology>
    </subcellularLocation>
</comment>
<comment type="tissue specificity">
    <text evidence="6">Expressed in young plants, stems and flowers.</text>
</comment>
<comment type="developmental stage">
    <text evidence="6">Mostly expressed in cotyledons during all steps of embryogenesis, and decrease toward the bent-cotyledon stage.</text>
</comment>
<comment type="similarity">
    <text evidence="8">Belongs to the glycosyltransferase 2 family. Plant cellulose synthase subfamily.</text>
</comment>
<proteinExistence type="evidence at transcript level"/>
<keyword id="KW-0007">Acetylation</keyword>
<keyword id="KW-1003">Cell membrane</keyword>
<keyword id="KW-0961">Cell wall biogenesis/degradation</keyword>
<keyword id="KW-0135">Cellulose biosynthesis</keyword>
<keyword id="KW-0325">Glycoprotein</keyword>
<keyword id="KW-0328">Glycosyltransferase</keyword>
<keyword id="KW-0464">Manganese</keyword>
<keyword id="KW-0472">Membrane</keyword>
<keyword id="KW-0479">Metal-binding</keyword>
<keyword id="KW-1185">Reference proteome</keyword>
<keyword id="KW-0808">Transferase</keyword>
<keyword id="KW-0812">Transmembrane</keyword>
<keyword id="KW-1133">Transmembrane helix</keyword>
<keyword id="KW-0862">Zinc</keyword>
<keyword id="KW-0863">Zinc-finger</keyword>
<name>CESA9_ARATH</name>
<gene>
    <name evidence="7" type="primary">CESA9</name>
    <name evidence="7" type="synonym">CESA09</name>
    <name evidence="9" type="ordered locus">At2g21770</name>
    <name evidence="10" type="ORF">F7D8.9</name>
</gene>
<dbReference type="EC" id="2.4.1.12" evidence="8"/>
<dbReference type="EMBL" id="AC007019">
    <property type="protein sequence ID" value="AAD20396.1"/>
    <property type="molecule type" value="Genomic_DNA"/>
</dbReference>
<dbReference type="EMBL" id="CP002685">
    <property type="protein sequence ID" value="AEC07220.1"/>
    <property type="molecule type" value="Genomic_DNA"/>
</dbReference>
<dbReference type="PIR" id="H84604">
    <property type="entry name" value="H84604"/>
</dbReference>
<dbReference type="RefSeq" id="NP_179768.1">
    <property type="nucleotide sequence ID" value="NM_127746.2"/>
</dbReference>
<dbReference type="SMR" id="Q9SJ22"/>
<dbReference type="FunCoup" id="Q9SJ22">
    <property type="interactions" value="15"/>
</dbReference>
<dbReference type="STRING" id="3702.Q9SJ22"/>
<dbReference type="CAZy" id="GT2">
    <property type="family name" value="Glycosyltransferase Family 2"/>
</dbReference>
<dbReference type="GlyCosmos" id="Q9SJ22">
    <property type="glycosylation" value="1 site, No reported glycans"/>
</dbReference>
<dbReference type="GlyGen" id="Q9SJ22">
    <property type="glycosylation" value="1 site"/>
</dbReference>
<dbReference type="iPTMnet" id="Q9SJ22"/>
<dbReference type="PaxDb" id="3702-AT2G21770.1"/>
<dbReference type="ProteomicsDB" id="241234"/>
<dbReference type="EnsemblPlants" id="AT2G21770.1">
    <property type="protein sequence ID" value="AT2G21770.1"/>
    <property type="gene ID" value="AT2G21770"/>
</dbReference>
<dbReference type="GeneID" id="816713"/>
<dbReference type="Gramene" id="AT2G21770.1">
    <property type="protein sequence ID" value="AT2G21770.1"/>
    <property type="gene ID" value="AT2G21770"/>
</dbReference>
<dbReference type="KEGG" id="ath:AT2G21770"/>
<dbReference type="Araport" id="AT2G21770"/>
<dbReference type="TAIR" id="AT2G21770">
    <property type="gene designation" value="CESA9"/>
</dbReference>
<dbReference type="eggNOG" id="ENOG502QQGG">
    <property type="taxonomic scope" value="Eukaryota"/>
</dbReference>
<dbReference type="HOGENOM" id="CLU_001418_0_1_1"/>
<dbReference type="InParanoid" id="Q9SJ22"/>
<dbReference type="OMA" id="GRTCNCW"/>
<dbReference type="PhylomeDB" id="Q9SJ22"/>
<dbReference type="BioCyc" id="ARA:AT2G21770-MONOMER"/>
<dbReference type="UniPathway" id="UPA00695"/>
<dbReference type="PRO" id="PR:Q9SJ22"/>
<dbReference type="Proteomes" id="UP000006548">
    <property type="component" value="Chromosome 2"/>
</dbReference>
<dbReference type="ExpressionAtlas" id="Q9SJ22">
    <property type="expression patterns" value="baseline and differential"/>
</dbReference>
<dbReference type="GO" id="GO:0005886">
    <property type="term" value="C:plasma membrane"/>
    <property type="evidence" value="ECO:0007669"/>
    <property type="project" value="UniProtKB-SubCell"/>
</dbReference>
<dbReference type="GO" id="GO:0016760">
    <property type="term" value="F:cellulose synthase (UDP-forming) activity"/>
    <property type="evidence" value="ECO:0007669"/>
    <property type="project" value="UniProtKB-EC"/>
</dbReference>
<dbReference type="GO" id="GO:0008270">
    <property type="term" value="F:zinc ion binding"/>
    <property type="evidence" value="ECO:0007669"/>
    <property type="project" value="UniProtKB-KW"/>
</dbReference>
<dbReference type="GO" id="GO:0071555">
    <property type="term" value="P:cell wall organization"/>
    <property type="evidence" value="ECO:0007669"/>
    <property type="project" value="UniProtKB-KW"/>
</dbReference>
<dbReference type="GO" id="GO:0030244">
    <property type="term" value="P:cellulose biosynthetic process"/>
    <property type="evidence" value="ECO:0007669"/>
    <property type="project" value="UniProtKB-KW"/>
</dbReference>
<dbReference type="GO" id="GO:0010214">
    <property type="term" value="P:seed coat development"/>
    <property type="evidence" value="ECO:0000315"/>
    <property type="project" value="TAIR"/>
</dbReference>
<dbReference type="CDD" id="cd16617">
    <property type="entry name" value="mRING-HC-C4C4_CesA"/>
    <property type="match status" value="1"/>
</dbReference>
<dbReference type="FunFam" id="3.30.40.10:FF:000031">
    <property type="entry name" value="Cellulose synthase"/>
    <property type="match status" value="1"/>
</dbReference>
<dbReference type="FunFam" id="3.90.550.10:FF:000009">
    <property type="entry name" value="Cellulose synthase"/>
    <property type="match status" value="1"/>
</dbReference>
<dbReference type="Gene3D" id="3.90.550.10">
    <property type="entry name" value="Spore Coat Polysaccharide Biosynthesis Protein SpsA, Chain A"/>
    <property type="match status" value="1"/>
</dbReference>
<dbReference type="Gene3D" id="3.30.40.10">
    <property type="entry name" value="Zinc/RING finger domain, C3HC4 (zinc finger)"/>
    <property type="match status" value="1"/>
</dbReference>
<dbReference type="InterPro" id="IPR005150">
    <property type="entry name" value="Cellulose_synth"/>
</dbReference>
<dbReference type="InterPro" id="IPR027934">
    <property type="entry name" value="CES_Znf_RING"/>
</dbReference>
<dbReference type="InterPro" id="IPR029044">
    <property type="entry name" value="Nucleotide-diphossugar_trans"/>
</dbReference>
<dbReference type="InterPro" id="IPR013083">
    <property type="entry name" value="Znf_RING/FYVE/PHD"/>
</dbReference>
<dbReference type="PANTHER" id="PTHR13301">
    <property type="entry name" value="X-BOX TRANSCRIPTION FACTOR-RELATED"/>
    <property type="match status" value="1"/>
</dbReference>
<dbReference type="Pfam" id="PF03552">
    <property type="entry name" value="Cellulose_synt"/>
    <property type="match status" value="1"/>
</dbReference>
<dbReference type="Pfam" id="PF14569">
    <property type="entry name" value="zf-UDP"/>
    <property type="match status" value="1"/>
</dbReference>
<dbReference type="SUPFAM" id="SSF53448">
    <property type="entry name" value="Nucleotide-diphospho-sugar transferases"/>
    <property type="match status" value="1"/>
</dbReference>
<dbReference type="SUPFAM" id="SSF57850">
    <property type="entry name" value="RING/U-box"/>
    <property type="match status" value="1"/>
</dbReference>
<protein>
    <recommendedName>
        <fullName evidence="7">Probable cellulose synthase A catalytic subunit 9 [UDP-forming]</fullName>
        <shortName evidence="7">AtCesA9</shortName>
        <ecNumber evidence="8">2.4.1.12</ecNumber>
    </recommendedName>
</protein>
<accession>Q9SJ22</accession>
<organism>
    <name type="scientific">Arabidopsis thaliana</name>
    <name type="common">Mouse-ear cress</name>
    <dbReference type="NCBI Taxonomy" id="3702"/>
    <lineage>
        <taxon>Eukaryota</taxon>
        <taxon>Viridiplantae</taxon>
        <taxon>Streptophyta</taxon>
        <taxon>Embryophyta</taxon>
        <taxon>Tracheophyta</taxon>
        <taxon>Spermatophyta</taxon>
        <taxon>Magnoliopsida</taxon>
        <taxon>eudicotyledons</taxon>
        <taxon>Gunneridae</taxon>
        <taxon>Pentapetalae</taxon>
        <taxon>rosids</taxon>
        <taxon>malvids</taxon>
        <taxon>Brassicales</taxon>
        <taxon>Brassicaceae</taxon>
        <taxon>Camelineae</taxon>
        <taxon>Arabidopsis</taxon>
    </lineage>
</organism>
<feature type="chain" id="PRO_0000166375" description="Probable cellulose synthase A catalytic subunit 9 [UDP-forming]">
    <location>
        <begin position="1"/>
        <end position="1088"/>
    </location>
</feature>
<feature type="topological domain" description="Cytoplasmic" evidence="4">
    <location>
        <begin position="1"/>
        <end position="283"/>
    </location>
</feature>
<feature type="transmembrane region" description="Helical" evidence="4">
    <location>
        <begin position="284"/>
        <end position="304"/>
    </location>
</feature>
<feature type="topological domain" description="Extracellular" evidence="4">
    <location>
        <begin position="305"/>
        <end position="306"/>
    </location>
</feature>
<feature type="transmembrane region" description="Helical" evidence="4">
    <location>
        <begin position="307"/>
        <end position="327"/>
    </location>
</feature>
<feature type="topological domain" description="Cytoplasmic" evidence="4">
    <location>
        <begin position="328"/>
        <end position="871"/>
    </location>
</feature>
<feature type="transmembrane region" description="Helical" evidence="4">
    <location>
        <begin position="872"/>
        <end position="892"/>
    </location>
</feature>
<feature type="topological domain" description="Extracellular" evidence="4">
    <location>
        <begin position="893"/>
        <end position="897"/>
    </location>
</feature>
<feature type="transmembrane region" description="Helical" evidence="4">
    <location>
        <begin position="898"/>
        <end position="918"/>
    </location>
</feature>
<feature type="topological domain" description="Cytoplasmic" evidence="4">
    <location>
        <begin position="919"/>
        <end position="933"/>
    </location>
</feature>
<feature type="transmembrane region" description="Helical" evidence="4">
    <location>
        <begin position="934"/>
        <end position="954"/>
    </location>
</feature>
<feature type="topological domain" description="Extracellular" evidence="4">
    <location>
        <begin position="955"/>
        <end position="983"/>
    </location>
</feature>
<feature type="transmembrane region" description="Helical" evidence="4">
    <location>
        <begin position="984"/>
        <end position="1004"/>
    </location>
</feature>
<feature type="topological domain" description="Cytoplasmic" evidence="4">
    <location>
        <begin position="1005"/>
        <end position="1015"/>
    </location>
</feature>
<feature type="transmembrane region" description="Helical" evidence="4">
    <location>
        <begin position="1016"/>
        <end position="1036"/>
    </location>
</feature>
<feature type="topological domain" description="Extracellular" evidence="4">
    <location>
        <begin position="1037"/>
        <end position="1045"/>
    </location>
</feature>
<feature type="transmembrane region" description="Helical" evidence="4">
    <location>
        <begin position="1046"/>
        <end position="1066"/>
    </location>
</feature>
<feature type="topological domain" description="Cytoplasmic" evidence="4">
    <location>
        <begin position="1067"/>
        <end position="1088"/>
    </location>
</feature>
<feature type="zinc finger region" description="RING-type; degenerate">
    <location>
        <begin position="39"/>
        <end position="85"/>
    </location>
</feature>
<feature type="active site" evidence="4">
    <location>
        <position position="402"/>
    </location>
</feature>
<feature type="active site" evidence="4">
    <location>
        <position position="788"/>
    </location>
</feature>
<feature type="binding site" evidence="3">
    <location>
        <position position="39"/>
    </location>
    <ligand>
        <name>Zn(2+)</name>
        <dbReference type="ChEBI" id="CHEBI:29105"/>
        <label>1</label>
    </ligand>
</feature>
<feature type="binding site" evidence="3">
    <location>
        <position position="42"/>
    </location>
    <ligand>
        <name>Zn(2+)</name>
        <dbReference type="ChEBI" id="CHEBI:29105"/>
        <label>1</label>
    </ligand>
</feature>
<feature type="binding site" evidence="3">
    <location>
        <position position="58"/>
    </location>
    <ligand>
        <name>Zn(2+)</name>
        <dbReference type="ChEBI" id="CHEBI:29105"/>
        <label>2</label>
    </ligand>
</feature>
<feature type="binding site" evidence="3">
    <location>
        <position position="61"/>
    </location>
    <ligand>
        <name>Zn(2+)</name>
        <dbReference type="ChEBI" id="CHEBI:29105"/>
        <label>2</label>
    </ligand>
</feature>
<feature type="binding site" evidence="3">
    <location>
        <position position="66"/>
    </location>
    <ligand>
        <name>Zn(2+)</name>
        <dbReference type="ChEBI" id="CHEBI:29105"/>
        <label>1</label>
    </ligand>
</feature>
<feature type="binding site" evidence="3">
    <location>
        <position position="69"/>
    </location>
    <ligand>
        <name>Zn(2+)</name>
        <dbReference type="ChEBI" id="CHEBI:29105"/>
        <label>1</label>
    </ligand>
</feature>
<feature type="binding site" evidence="3">
    <location>
        <position position="81"/>
    </location>
    <ligand>
        <name>Zn(2+)</name>
        <dbReference type="ChEBI" id="CHEBI:29105"/>
        <label>2</label>
    </ligand>
</feature>
<feature type="binding site" evidence="3">
    <location>
        <position position="84"/>
    </location>
    <ligand>
        <name>Zn(2+)</name>
        <dbReference type="ChEBI" id="CHEBI:29105"/>
        <label>2</label>
    </ligand>
</feature>
<feature type="binding site" evidence="2">
    <location>
        <position position="366"/>
    </location>
    <ligand>
        <name>UDP-alpha-D-glucose</name>
        <dbReference type="ChEBI" id="CHEBI:58885"/>
    </ligand>
</feature>
<feature type="binding site" evidence="2">
    <location>
        <position position="372"/>
    </location>
    <ligand>
        <name>UDP-alpha-D-glucose</name>
        <dbReference type="ChEBI" id="CHEBI:58885"/>
    </ligand>
</feature>
<feature type="binding site" evidence="2">
    <location>
        <position position="373"/>
    </location>
    <ligand>
        <name>UDP-alpha-D-glucose</name>
        <dbReference type="ChEBI" id="CHEBI:58885"/>
    </ligand>
</feature>
<feature type="binding site" evidence="2">
    <location>
        <position position="402"/>
    </location>
    <ligand>
        <name>UDP-alpha-D-glucose</name>
        <dbReference type="ChEBI" id="CHEBI:58885"/>
    </ligand>
</feature>
<feature type="binding site" evidence="2">
    <location>
        <position position="543"/>
    </location>
    <ligand>
        <name>UDP-alpha-D-glucose</name>
        <dbReference type="ChEBI" id="CHEBI:58885"/>
    </ligand>
</feature>
<feature type="binding site" evidence="2">
    <location>
        <position position="544"/>
    </location>
    <ligand>
        <name>Mn(2+)</name>
        <dbReference type="ChEBI" id="CHEBI:29035"/>
    </ligand>
</feature>
<feature type="binding site" evidence="2">
    <location>
        <position position="568"/>
    </location>
    <ligand>
        <name>Mn(2+)</name>
        <dbReference type="ChEBI" id="CHEBI:29035"/>
    </ligand>
</feature>
<feature type="modified residue" description="N-acetylmethionine" evidence="1">
    <location>
        <position position="1"/>
    </location>
</feature>
<feature type="glycosylation site" description="N-linked (GlcNAc...) asparagine" evidence="5">
    <location>
        <position position="961"/>
    </location>
</feature>